<proteinExistence type="inferred from homology"/>
<keyword id="KW-0997">Cell inner membrane</keyword>
<keyword id="KW-1003">Cell membrane</keyword>
<keyword id="KW-0350">Heme biosynthesis</keyword>
<keyword id="KW-0472">Membrane</keyword>
<keyword id="KW-0808">Transferase</keyword>
<keyword id="KW-0812">Transmembrane</keyword>
<keyword id="KW-1133">Transmembrane helix</keyword>
<reference key="1">
    <citation type="journal article" date="2007" name="Nat. Genet.">
        <title>Genomic analysis of Bartonella identifies type IV secretion systems as host adaptability factors.</title>
        <authorList>
            <person name="Saenz H.L."/>
            <person name="Engel P."/>
            <person name="Stoeckli M.C."/>
            <person name="Lanz C."/>
            <person name="Raddatz G."/>
            <person name="Vayssier-Taussat M."/>
            <person name="Birtles R."/>
            <person name="Schuster S.C."/>
            <person name="Dehio C."/>
        </authorList>
    </citation>
    <scope>NUCLEOTIDE SEQUENCE [LARGE SCALE GENOMIC DNA]</scope>
    <source>
        <strain>CIP 105476 / IBS 506</strain>
    </source>
</reference>
<evidence type="ECO:0000255" key="1">
    <source>
        <dbReference type="HAMAP-Rule" id="MF_00154"/>
    </source>
</evidence>
<organism>
    <name type="scientific">Bartonella tribocorum (strain CIP 105476 / IBS 506)</name>
    <dbReference type="NCBI Taxonomy" id="382640"/>
    <lineage>
        <taxon>Bacteria</taxon>
        <taxon>Pseudomonadati</taxon>
        <taxon>Pseudomonadota</taxon>
        <taxon>Alphaproteobacteria</taxon>
        <taxon>Hyphomicrobiales</taxon>
        <taxon>Bartonellaceae</taxon>
        <taxon>Bartonella</taxon>
    </lineage>
</organism>
<accession>A9IQQ6</accession>
<sequence>MSVSGELSVANGKSTPPKSSISDYIALLKPRVMSLVVFTALVGLMVSPVPINPWYGFLAIICIAVGGGGAGALNMWYDADIDAVMERTKKRPIPMGKISPPKAFIFGMVLSLLSVLVMGSFINWFAAFFLAFTIFFYVVIYTIWLKRITPQNIVIGGASGAFPPMIGWAVTTGAVSLDSFLLFLIIFMWTPPHFWALSLFSSLDYEAAGIPMMPNVRGEYSTKKQILFYTVLMVLCATAPCFTGLGGVFYGIFSTILGIIFIYFAYRLWKANTHDETILMAKKTFFFSLLYLAAVFGALLIESLVRYFIDL</sequence>
<protein>
    <recommendedName>
        <fullName evidence="1">Protoheme IX farnesyltransferase</fullName>
        <ecNumber evidence="1">2.5.1.141</ecNumber>
    </recommendedName>
    <alternativeName>
        <fullName evidence="1">Heme B farnesyltransferase</fullName>
    </alternativeName>
    <alternativeName>
        <fullName evidence="1">Heme O synthase</fullName>
    </alternativeName>
</protein>
<comment type="function">
    <text evidence="1">Converts heme B (protoheme IX) to heme O by substitution of the vinyl group on carbon 2 of heme B porphyrin ring with a hydroxyethyl farnesyl side group.</text>
</comment>
<comment type="catalytic activity">
    <reaction evidence="1">
        <text>heme b + (2E,6E)-farnesyl diphosphate + H2O = Fe(II)-heme o + diphosphate</text>
        <dbReference type="Rhea" id="RHEA:28070"/>
        <dbReference type="ChEBI" id="CHEBI:15377"/>
        <dbReference type="ChEBI" id="CHEBI:33019"/>
        <dbReference type="ChEBI" id="CHEBI:60344"/>
        <dbReference type="ChEBI" id="CHEBI:60530"/>
        <dbReference type="ChEBI" id="CHEBI:175763"/>
        <dbReference type="EC" id="2.5.1.141"/>
    </reaction>
</comment>
<comment type="pathway">
    <text evidence="1">Porphyrin-containing compound metabolism; heme O biosynthesis; heme O from protoheme: step 1/1.</text>
</comment>
<comment type="subcellular location">
    <subcellularLocation>
        <location evidence="1">Cell inner membrane</location>
        <topology evidence="1">Multi-pass membrane protein</topology>
    </subcellularLocation>
</comment>
<comment type="miscellaneous">
    <text evidence="1">Carbon 2 of the heme B porphyrin ring is defined according to the Fischer nomenclature.</text>
</comment>
<comment type="similarity">
    <text evidence="1">Belongs to the UbiA prenyltransferase family. Protoheme IX farnesyltransferase subfamily.</text>
</comment>
<dbReference type="EC" id="2.5.1.141" evidence="1"/>
<dbReference type="EMBL" id="AM260525">
    <property type="protein sequence ID" value="CAK01088.1"/>
    <property type="molecule type" value="Genomic_DNA"/>
</dbReference>
<dbReference type="RefSeq" id="WP_012231193.1">
    <property type="nucleotide sequence ID" value="NC_010161.1"/>
</dbReference>
<dbReference type="SMR" id="A9IQQ6"/>
<dbReference type="KEGG" id="btr:BT_0654"/>
<dbReference type="eggNOG" id="COG0109">
    <property type="taxonomic scope" value="Bacteria"/>
</dbReference>
<dbReference type="HOGENOM" id="CLU_029631_0_2_5"/>
<dbReference type="UniPathway" id="UPA00834">
    <property type="reaction ID" value="UER00712"/>
</dbReference>
<dbReference type="Proteomes" id="UP000001592">
    <property type="component" value="Chromosome"/>
</dbReference>
<dbReference type="GO" id="GO:0005886">
    <property type="term" value="C:plasma membrane"/>
    <property type="evidence" value="ECO:0007669"/>
    <property type="project" value="UniProtKB-SubCell"/>
</dbReference>
<dbReference type="GO" id="GO:0008495">
    <property type="term" value="F:protoheme IX farnesyltransferase activity"/>
    <property type="evidence" value="ECO:0007669"/>
    <property type="project" value="UniProtKB-UniRule"/>
</dbReference>
<dbReference type="GO" id="GO:0048034">
    <property type="term" value="P:heme O biosynthetic process"/>
    <property type="evidence" value="ECO:0007669"/>
    <property type="project" value="UniProtKB-UniRule"/>
</dbReference>
<dbReference type="CDD" id="cd13957">
    <property type="entry name" value="PT_UbiA_Cox10"/>
    <property type="match status" value="1"/>
</dbReference>
<dbReference type="Gene3D" id="1.10.357.140">
    <property type="entry name" value="UbiA prenyltransferase"/>
    <property type="match status" value="1"/>
</dbReference>
<dbReference type="HAMAP" id="MF_00154">
    <property type="entry name" value="CyoE_CtaB"/>
    <property type="match status" value="1"/>
</dbReference>
<dbReference type="InterPro" id="IPR006369">
    <property type="entry name" value="Protohaem_IX_farnesylTrfase"/>
</dbReference>
<dbReference type="InterPro" id="IPR000537">
    <property type="entry name" value="UbiA_prenyltransferase"/>
</dbReference>
<dbReference type="InterPro" id="IPR030470">
    <property type="entry name" value="UbiA_prenylTrfase_CS"/>
</dbReference>
<dbReference type="InterPro" id="IPR044878">
    <property type="entry name" value="UbiA_sf"/>
</dbReference>
<dbReference type="NCBIfam" id="TIGR01473">
    <property type="entry name" value="cyoE_ctaB"/>
    <property type="match status" value="1"/>
</dbReference>
<dbReference type="NCBIfam" id="NF003349">
    <property type="entry name" value="PRK04375.1-2"/>
    <property type="match status" value="1"/>
</dbReference>
<dbReference type="PANTHER" id="PTHR43448:SF7">
    <property type="entry name" value="4-HYDROXYBENZOATE SOLANESYLTRANSFERASE"/>
    <property type="match status" value="1"/>
</dbReference>
<dbReference type="PANTHER" id="PTHR43448">
    <property type="entry name" value="PROTOHEME IX FARNESYLTRANSFERASE, MITOCHONDRIAL"/>
    <property type="match status" value="1"/>
</dbReference>
<dbReference type="Pfam" id="PF01040">
    <property type="entry name" value="UbiA"/>
    <property type="match status" value="1"/>
</dbReference>
<dbReference type="PROSITE" id="PS00943">
    <property type="entry name" value="UBIA"/>
    <property type="match status" value="1"/>
</dbReference>
<gene>
    <name evidence="1" type="primary">ctaB</name>
    <name type="ordered locus">BT_0654</name>
</gene>
<feature type="chain" id="PRO_0000346027" description="Protoheme IX farnesyltransferase">
    <location>
        <begin position="1"/>
        <end position="311"/>
    </location>
</feature>
<feature type="transmembrane region" description="Helical" evidence="1">
    <location>
        <begin position="32"/>
        <end position="52"/>
    </location>
</feature>
<feature type="transmembrane region" description="Helical" evidence="1">
    <location>
        <begin position="53"/>
        <end position="73"/>
    </location>
</feature>
<feature type="transmembrane region" description="Helical" evidence="1">
    <location>
        <begin position="104"/>
        <end position="124"/>
    </location>
</feature>
<feature type="transmembrane region" description="Helical" evidence="1">
    <location>
        <begin position="125"/>
        <end position="145"/>
    </location>
</feature>
<feature type="transmembrane region" description="Helical" evidence="1">
    <location>
        <begin position="153"/>
        <end position="173"/>
    </location>
</feature>
<feature type="transmembrane region" description="Helical" evidence="1">
    <location>
        <begin position="180"/>
        <end position="200"/>
    </location>
</feature>
<feature type="transmembrane region" description="Helical" evidence="1">
    <location>
        <begin position="224"/>
        <end position="244"/>
    </location>
</feature>
<feature type="transmembrane region" description="Helical" evidence="1">
    <location>
        <begin position="245"/>
        <end position="265"/>
    </location>
</feature>
<feature type="transmembrane region" description="Helical" evidence="1">
    <location>
        <begin position="285"/>
        <end position="305"/>
    </location>
</feature>
<name>COXX_BART1</name>